<reference key="1">
    <citation type="journal article" date="1998" name="Nature">
        <title>The genome sequence of Rickettsia prowazekii and the origin of mitochondria.</title>
        <authorList>
            <person name="Andersson S.G.E."/>
            <person name="Zomorodipour A."/>
            <person name="Andersson J.O."/>
            <person name="Sicheritz-Ponten T."/>
            <person name="Alsmark U.C.M."/>
            <person name="Podowski R.M."/>
            <person name="Naeslund A.K."/>
            <person name="Eriksson A.-S."/>
            <person name="Winkler H.H."/>
            <person name="Kurland C.G."/>
        </authorList>
    </citation>
    <scope>NUCLEOTIDE SEQUENCE [LARGE SCALE GENOMIC DNA]</scope>
    <source>
        <strain>Madrid E</strain>
    </source>
</reference>
<accession>Q9ZDD9</accession>
<dbReference type="EMBL" id="AJ235271">
    <property type="protein sequence ID" value="CAA14849.1"/>
    <property type="molecule type" value="Genomic_DNA"/>
</dbReference>
<dbReference type="PIR" id="G71696">
    <property type="entry name" value="G71696"/>
</dbReference>
<dbReference type="RefSeq" id="NP_220773.1">
    <property type="nucleotide sequence ID" value="NC_000963.1"/>
</dbReference>
<dbReference type="RefSeq" id="WP_004597572.1">
    <property type="nucleotide sequence ID" value="NC_000963.1"/>
</dbReference>
<dbReference type="SMR" id="Q9ZDD9"/>
<dbReference type="STRING" id="272947.gene:17555472"/>
<dbReference type="EnsemblBacteria" id="CAA14849">
    <property type="protein sequence ID" value="CAA14849"/>
    <property type="gene ID" value="CAA14849"/>
</dbReference>
<dbReference type="KEGG" id="rpr:RP392"/>
<dbReference type="PATRIC" id="fig|272947.5.peg.405"/>
<dbReference type="eggNOG" id="COG2917">
    <property type="taxonomic scope" value="Bacteria"/>
</dbReference>
<dbReference type="HOGENOM" id="CLU_089554_1_1_5"/>
<dbReference type="OrthoDB" id="9788219at2"/>
<dbReference type="Proteomes" id="UP000002480">
    <property type="component" value="Chromosome"/>
</dbReference>
<dbReference type="GO" id="GO:0005886">
    <property type="term" value="C:plasma membrane"/>
    <property type="evidence" value="ECO:0007669"/>
    <property type="project" value="UniProtKB-SubCell"/>
</dbReference>
<dbReference type="HAMAP" id="MF_00189">
    <property type="entry name" value="YciB"/>
    <property type="match status" value="1"/>
</dbReference>
<dbReference type="InterPro" id="IPR006008">
    <property type="entry name" value="YciB"/>
</dbReference>
<dbReference type="NCBIfam" id="TIGR00997">
    <property type="entry name" value="ispZ"/>
    <property type="match status" value="1"/>
</dbReference>
<dbReference type="NCBIfam" id="NF001323">
    <property type="entry name" value="PRK00259.1-1"/>
    <property type="match status" value="1"/>
</dbReference>
<dbReference type="PANTHER" id="PTHR36917:SF1">
    <property type="entry name" value="INNER MEMBRANE-SPANNING PROTEIN YCIB"/>
    <property type="match status" value="1"/>
</dbReference>
<dbReference type="PANTHER" id="PTHR36917">
    <property type="entry name" value="INTRACELLULAR SEPTATION PROTEIN A-RELATED"/>
    <property type="match status" value="1"/>
</dbReference>
<dbReference type="Pfam" id="PF04279">
    <property type="entry name" value="IspA"/>
    <property type="match status" value="1"/>
</dbReference>
<evidence type="ECO:0000255" key="1">
    <source>
        <dbReference type="HAMAP-Rule" id="MF_00189"/>
    </source>
</evidence>
<proteinExistence type="inferred from homology"/>
<organism>
    <name type="scientific">Rickettsia prowazekii (strain Madrid E)</name>
    <dbReference type="NCBI Taxonomy" id="272947"/>
    <lineage>
        <taxon>Bacteria</taxon>
        <taxon>Pseudomonadati</taxon>
        <taxon>Pseudomonadota</taxon>
        <taxon>Alphaproteobacteria</taxon>
        <taxon>Rickettsiales</taxon>
        <taxon>Rickettsiaceae</taxon>
        <taxon>Rickettsieae</taxon>
        <taxon>Rickettsia</taxon>
        <taxon>typhus group</taxon>
    </lineage>
</organism>
<keyword id="KW-0997">Cell inner membrane</keyword>
<keyword id="KW-1003">Cell membrane</keyword>
<keyword id="KW-0472">Membrane</keyword>
<keyword id="KW-1185">Reference proteome</keyword>
<keyword id="KW-0812">Transmembrane</keyword>
<keyword id="KW-1133">Transmembrane helix</keyword>
<name>YCIB_RICPR</name>
<protein>
    <recommendedName>
        <fullName evidence="1">Inner membrane-spanning protein YciB</fullName>
    </recommendedName>
</protein>
<feature type="chain" id="PRO_0000206546" description="Inner membrane-spanning protein YciB">
    <location>
        <begin position="1"/>
        <end position="180"/>
    </location>
</feature>
<feature type="transmembrane region" description="Helical" evidence="1">
    <location>
        <begin position="25"/>
        <end position="45"/>
    </location>
</feature>
<feature type="transmembrane region" description="Helical" evidence="1">
    <location>
        <begin position="49"/>
        <end position="69"/>
    </location>
</feature>
<feature type="transmembrane region" description="Helical" evidence="1">
    <location>
        <begin position="76"/>
        <end position="96"/>
    </location>
</feature>
<feature type="transmembrane region" description="Helical" evidence="1">
    <location>
        <begin position="118"/>
        <end position="138"/>
    </location>
</feature>
<feature type="transmembrane region" description="Helical" evidence="1">
    <location>
        <begin position="150"/>
        <end position="170"/>
    </location>
</feature>
<gene>
    <name evidence="1" type="primary">yciB</name>
    <name type="ordered locus">RP392</name>
</gene>
<sequence length="180" mass="20477">MLKLLSEIGPVIAFFAGFFYGGGIQNATLYMLITSIICITLCYIIDKKVSKLSIISSTVLFISGIITLISGDSMYIKIKPTILYVIFGIIFLMSGIKKNPFIKYALESIVRLKEESWIILSYRTAAFFFFMAVVNEVVWRNFSDETWVKFKVFGVIPITFIFILLQLPLLLKNKLPDSKI</sequence>
<comment type="function">
    <text evidence="1">Plays a role in cell envelope biogenesis, maintenance of cell envelope integrity and membrane homeostasis.</text>
</comment>
<comment type="subcellular location">
    <subcellularLocation>
        <location evidence="1">Cell inner membrane</location>
        <topology evidence="1">Multi-pass membrane protein</topology>
    </subcellularLocation>
</comment>
<comment type="similarity">
    <text evidence="1">Belongs to the YciB family.</text>
</comment>